<accession>Q5HQ80</accession>
<keyword id="KW-0963">Cytoplasm</keyword>
<keyword id="KW-0255">Endonuclease</keyword>
<keyword id="KW-0269">Exonuclease</keyword>
<keyword id="KW-0378">Hydrolase</keyword>
<keyword id="KW-0479">Metal-binding</keyword>
<keyword id="KW-0540">Nuclease</keyword>
<keyword id="KW-1185">Reference proteome</keyword>
<keyword id="KW-0694">RNA-binding</keyword>
<keyword id="KW-0698">rRNA processing</keyword>
<keyword id="KW-0862">Zinc</keyword>
<protein>
    <recommendedName>
        <fullName evidence="2">Ribonuclease J 1</fullName>
        <shortName evidence="2">RNase J1</shortName>
        <ecNumber evidence="2">3.1.-.-</ecNumber>
    </recommendedName>
</protein>
<feature type="chain" id="PRO_0000286852" description="Ribonuclease J 1">
    <location>
        <begin position="1"/>
        <end position="560"/>
    </location>
</feature>
<feature type="binding site" evidence="2">
    <location>
        <position position="74"/>
    </location>
    <ligand>
        <name>Zn(2+)</name>
        <dbReference type="ChEBI" id="CHEBI:29105"/>
        <label>1</label>
        <note>catalytic</note>
    </ligand>
</feature>
<feature type="binding site" evidence="2">
    <location>
        <position position="76"/>
    </location>
    <ligand>
        <name>Zn(2+)</name>
        <dbReference type="ChEBI" id="CHEBI:29105"/>
        <label>1</label>
        <note>catalytic</note>
    </ligand>
</feature>
<feature type="binding site" evidence="2">
    <location>
        <position position="78"/>
    </location>
    <ligand>
        <name>Zn(2+)</name>
        <dbReference type="ChEBI" id="CHEBI:29105"/>
        <label>2</label>
        <note>catalytic</note>
    </ligand>
</feature>
<feature type="binding site" evidence="2">
    <location>
        <position position="79"/>
    </location>
    <ligand>
        <name>Zn(2+)</name>
        <dbReference type="ChEBI" id="CHEBI:29105"/>
        <label>2</label>
        <note>catalytic</note>
    </ligand>
</feature>
<feature type="binding site" evidence="2">
    <location>
        <position position="142"/>
    </location>
    <ligand>
        <name>Zn(2+)</name>
        <dbReference type="ChEBI" id="CHEBI:29105"/>
        <label>1</label>
        <note>catalytic</note>
    </ligand>
</feature>
<feature type="binding site" evidence="2">
    <location>
        <position position="164"/>
    </location>
    <ligand>
        <name>Zn(2+)</name>
        <dbReference type="ChEBI" id="CHEBI:29105"/>
        <label>1</label>
        <note>catalytic</note>
    </ligand>
</feature>
<feature type="binding site" evidence="2">
    <location>
        <position position="164"/>
    </location>
    <ligand>
        <name>Zn(2+)</name>
        <dbReference type="ChEBI" id="CHEBI:29105"/>
        <label>2</label>
        <note>catalytic</note>
    </ligand>
</feature>
<feature type="binding site" evidence="2">
    <location>
        <begin position="364"/>
        <end position="368"/>
    </location>
    <ligand>
        <name>substrate</name>
    </ligand>
</feature>
<feature type="binding site" evidence="2">
    <location>
        <position position="390"/>
    </location>
    <ligand>
        <name>Zn(2+)</name>
        <dbReference type="ChEBI" id="CHEBI:29105"/>
        <label>2</label>
        <note>catalytic</note>
    </ligand>
</feature>
<name>RNJ1_STAEQ</name>
<organism>
    <name type="scientific">Staphylococcus epidermidis (strain ATCC 35984 / DSM 28319 / BCRC 17069 / CCUG 31568 / BM 3577 / RP62A)</name>
    <dbReference type="NCBI Taxonomy" id="176279"/>
    <lineage>
        <taxon>Bacteria</taxon>
        <taxon>Bacillati</taxon>
        <taxon>Bacillota</taxon>
        <taxon>Bacilli</taxon>
        <taxon>Bacillales</taxon>
        <taxon>Staphylococcaceae</taxon>
        <taxon>Staphylococcus</taxon>
    </lineage>
</organism>
<sequence length="560" mass="62051">MKQLHSNEVGVYALGGLGEVGKNTYAVEYKDEIVIIDAGIKFPDDNLLGIDYVIPDYTYLEQNQDKIVGLFITHGHEDHIGGVPFLLKQINVPIYGGPLALGLIRNKLEEHHLLRTTELHEIDESSVIKSKHFEISFYLTTHSIPEAYGVIVDTPEGKIVHTGDFKFDFTPVGEPANIAKMAQLGHEGVLCLLSDSTNALVPDFTLSEREVGQNVDKIFRNCKGRIIFATFASNIYRVQQAVEAAIKYNRKIVTFGRSMENNIKIGMELGYIKAPPETFIEPNKINSVPKHELLILCTGSQGEPMAALSRIANGTHKQIKIIPEDTVVFSSSPIPGNTKSINRTINALYKAGADVIHSKISNIHTSGHGSQGDQQLMLRLIQPKYFLPIHGEYRMLKAHGETGVQCGVDEDNVFIFDIGDVLALTHDSARKAGRIPSGNVLVDGSGIGDIGNVVIRDRKLLSEEGLVIVVVSIDFNTNKLLSGPDIISRGFVYMRESGQLIYDAQRKIKGDVISKLNSNKDIQWHQIKSSIIETLHPYLYEKTARKPMILPVIMKVNEDK</sequence>
<evidence type="ECO:0000250" key="1"/>
<evidence type="ECO:0000255" key="2">
    <source>
        <dbReference type="HAMAP-Rule" id="MF_01491"/>
    </source>
</evidence>
<dbReference type="EC" id="3.1.-.-" evidence="2"/>
<dbReference type="EMBL" id="CP000029">
    <property type="protein sequence ID" value="AAW54040.1"/>
    <property type="molecule type" value="Genomic_DNA"/>
</dbReference>
<dbReference type="SMR" id="Q5HQ80"/>
<dbReference type="STRING" id="176279.SERP0676"/>
<dbReference type="KEGG" id="ser:SERP0676"/>
<dbReference type="eggNOG" id="COG0595">
    <property type="taxonomic scope" value="Bacteria"/>
</dbReference>
<dbReference type="HOGENOM" id="CLU_008727_3_1_9"/>
<dbReference type="Proteomes" id="UP000000531">
    <property type="component" value="Chromosome"/>
</dbReference>
<dbReference type="GO" id="GO:0005737">
    <property type="term" value="C:cytoplasm"/>
    <property type="evidence" value="ECO:0007669"/>
    <property type="project" value="UniProtKB-SubCell"/>
</dbReference>
<dbReference type="GO" id="GO:0004534">
    <property type="term" value="F:5'-3' RNA exonuclease activity"/>
    <property type="evidence" value="ECO:0007669"/>
    <property type="project" value="UniProtKB-UniRule"/>
</dbReference>
<dbReference type="GO" id="GO:0003723">
    <property type="term" value="F:RNA binding"/>
    <property type="evidence" value="ECO:0007669"/>
    <property type="project" value="UniProtKB-UniRule"/>
</dbReference>
<dbReference type="GO" id="GO:0004521">
    <property type="term" value="F:RNA endonuclease activity"/>
    <property type="evidence" value="ECO:0007669"/>
    <property type="project" value="UniProtKB-UniRule"/>
</dbReference>
<dbReference type="GO" id="GO:0008270">
    <property type="term" value="F:zinc ion binding"/>
    <property type="evidence" value="ECO:0007669"/>
    <property type="project" value="InterPro"/>
</dbReference>
<dbReference type="GO" id="GO:0006364">
    <property type="term" value="P:rRNA processing"/>
    <property type="evidence" value="ECO:0007669"/>
    <property type="project" value="UniProtKB-UniRule"/>
</dbReference>
<dbReference type="CDD" id="cd07714">
    <property type="entry name" value="RNaseJ_MBL-fold"/>
    <property type="match status" value="1"/>
</dbReference>
<dbReference type="FunFam" id="3.10.20.580:FF:000001">
    <property type="entry name" value="Ribonuclease J"/>
    <property type="match status" value="1"/>
</dbReference>
<dbReference type="Gene3D" id="3.10.20.580">
    <property type="match status" value="1"/>
</dbReference>
<dbReference type="Gene3D" id="3.40.50.10710">
    <property type="entry name" value="Metallo-hydrolase/oxidoreductase"/>
    <property type="match status" value="1"/>
</dbReference>
<dbReference type="Gene3D" id="3.60.15.10">
    <property type="entry name" value="Ribonuclease Z/Hydroxyacylglutathione hydrolase-like"/>
    <property type="match status" value="1"/>
</dbReference>
<dbReference type="HAMAP" id="MF_01491">
    <property type="entry name" value="RNase_J_bact"/>
    <property type="match status" value="1"/>
</dbReference>
<dbReference type="InterPro" id="IPR001279">
    <property type="entry name" value="Metallo-B-lactamas"/>
</dbReference>
<dbReference type="InterPro" id="IPR036866">
    <property type="entry name" value="RibonucZ/Hydroxyglut_hydro"/>
</dbReference>
<dbReference type="InterPro" id="IPR011108">
    <property type="entry name" value="RMMBL"/>
</dbReference>
<dbReference type="InterPro" id="IPR004613">
    <property type="entry name" value="RNase_J"/>
</dbReference>
<dbReference type="InterPro" id="IPR042173">
    <property type="entry name" value="RNase_J_2"/>
</dbReference>
<dbReference type="InterPro" id="IPR055132">
    <property type="entry name" value="RNase_J_b_CASP"/>
</dbReference>
<dbReference type="InterPro" id="IPR030854">
    <property type="entry name" value="RNase_J_bac"/>
</dbReference>
<dbReference type="InterPro" id="IPR041636">
    <property type="entry name" value="RNase_J_C"/>
</dbReference>
<dbReference type="InterPro" id="IPR001587">
    <property type="entry name" value="RNase_J_CS"/>
</dbReference>
<dbReference type="NCBIfam" id="TIGR00649">
    <property type="entry name" value="MG423"/>
    <property type="match status" value="1"/>
</dbReference>
<dbReference type="NCBIfam" id="NF047419">
    <property type="entry name" value="RNase_J1_RnjA"/>
    <property type="match status" value="1"/>
</dbReference>
<dbReference type="PANTHER" id="PTHR43694">
    <property type="entry name" value="RIBONUCLEASE J"/>
    <property type="match status" value="1"/>
</dbReference>
<dbReference type="PANTHER" id="PTHR43694:SF1">
    <property type="entry name" value="RIBONUCLEASE J"/>
    <property type="match status" value="1"/>
</dbReference>
<dbReference type="Pfam" id="PF00753">
    <property type="entry name" value="Lactamase_B"/>
    <property type="match status" value="1"/>
</dbReference>
<dbReference type="Pfam" id="PF07521">
    <property type="entry name" value="RMMBL"/>
    <property type="match status" value="1"/>
</dbReference>
<dbReference type="Pfam" id="PF22505">
    <property type="entry name" value="RNase_J_b_CASP"/>
    <property type="match status" value="1"/>
</dbReference>
<dbReference type="Pfam" id="PF17770">
    <property type="entry name" value="RNase_J_C"/>
    <property type="match status" value="1"/>
</dbReference>
<dbReference type="PIRSF" id="PIRSF004803">
    <property type="entry name" value="RnjA"/>
    <property type="match status" value="1"/>
</dbReference>
<dbReference type="SMART" id="SM00849">
    <property type="entry name" value="Lactamase_B"/>
    <property type="match status" value="1"/>
</dbReference>
<dbReference type="SUPFAM" id="SSF56281">
    <property type="entry name" value="Metallo-hydrolase/oxidoreductase"/>
    <property type="match status" value="1"/>
</dbReference>
<dbReference type="PROSITE" id="PS01292">
    <property type="entry name" value="UPF0036"/>
    <property type="match status" value="1"/>
</dbReference>
<proteinExistence type="inferred from homology"/>
<gene>
    <name evidence="2" type="primary">rnj1</name>
    <name type="ordered locus">SERP0676</name>
</gene>
<reference key="1">
    <citation type="journal article" date="2005" name="J. Bacteriol.">
        <title>Insights on evolution of virulence and resistance from the complete genome analysis of an early methicillin-resistant Staphylococcus aureus strain and a biofilm-producing methicillin-resistant Staphylococcus epidermidis strain.</title>
        <authorList>
            <person name="Gill S.R."/>
            <person name="Fouts D.E."/>
            <person name="Archer G.L."/>
            <person name="Mongodin E.F."/>
            <person name="DeBoy R.T."/>
            <person name="Ravel J."/>
            <person name="Paulsen I.T."/>
            <person name="Kolonay J.F."/>
            <person name="Brinkac L.M."/>
            <person name="Beanan M.J."/>
            <person name="Dodson R.J."/>
            <person name="Daugherty S.C."/>
            <person name="Madupu R."/>
            <person name="Angiuoli S.V."/>
            <person name="Durkin A.S."/>
            <person name="Haft D.H."/>
            <person name="Vamathevan J.J."/>
            <person name="Khouri H."/>
            <person name="Utterback T.R."/>
            <person name="Lee C."/>
            <person name="Dimitrov G."/>
            <person name="Jiang L."/>
            <person name="Qin H."/>
            <person name="Weidman J."/>
            <person name="Tran K."/>
            <person name="Kang K.H."/>
            <person name="Hance I.R."/>
            <person name="Nelson K.E."/>
            <person name="Fraser C.M."/>
        </authorList>
    </citation>
    <scope>NUCLEOTIDE SEQUENCE [LARGE SCALE GENOMIC DNA]</scope>
    <source>
        <strain>ATCC 35984 / DSM 28319 / BCRC 17069 / CCUG 31568 / BM 3577 / RP62A</strain>
    </source>
</reference>
<comment type="function">
    <text evidence="1">An RNase that has 5'-3' exonuclease and possibly endoonuclease activity. Involved in maturation of rRNA and in some organisms also mRNA maturation and/or decay (By similarity).</text>
</comment>
<comment type="cofactor">
    <cofactor evidence="2">
        <name>Zn(2+)</name>
        <dbReference type="ChEBI" id="CHEBI:29105"/>
    </cofactor>
    <text evidence="2">Binds up to 2 Zn(2+) ions per subunit. It is not clear if Zn(2+) or Mg(2+) is physiologically important.</text>
</comment>
<comment type="subunit">
    <text evidence="2">Homodimer, may be a subunit of the RNA degradosome.</text>
</comment>
<comment type="subcellular location">
    <subcellularLocation>
        <location evidence="2">Cytoplasm</location>
    </subcellularLocation>
</comment>
<comment type="similarity">
    <text evidence="2">Belongs to the metallo-beta-lactamase superfamily. RNA-metabolizing metallo-beta-lactamase-like family. Bacterial RNase J subfamily.</text>
</comment>